<keyword id="KW-0002">3D-structure</keyword>
<keyword id="KW-0007">Acetylation</keyword>
<keyword id="KW-0067">ATP-binding</keyword>
<keyword id="KW-0436">Ligase</keyword>
<keyword id="KW-0460">Magnesium</keyword>
<keyword id="KW-0479">Metal-binding</keyword>
<keyword id="KW-0547">Nucleotide-binding</keyword>
<keyword id="KW-1185">Reference proteome</keyword>
<reference key="1">
    <citation type="journal article" date="2001" name="Nature">
        <title>Complete genome sequence of Salmonella enterica serovar Typhimurium LT2.</title>
        <authorList>
            <person name="McClelland M."/>
            <person name="Sanderson K.E."/>
            <person name="Spieth J."/>
            <person name="Clifton S.W."/>
            <person name="Latreille P."/>
            <person name="Courtney L."/>
            <person name="Porwollik S."/>
            <person name="Ali J."/>
            <person name="Dante M."/>
            <person name="Du F."/>
            <person name="Hou S."/>
            <person name="Layman D."/>
            <person name="Leonard S."/>
            <person name="Nguyen C."/>
            <person name="Scott K."/>
            <person name="Holmes A."/>
            <person name="Grewal N."/>
            <person name="Mulvaney E."/>
            <person name="Ryan E."/>
            <person name="Sun H."/>
            <person name="Florea L."/>
            <person name="Miller W."/>
            <person name="Stoneking T."/>
            <person name="Nhan M."/>
            <person name="Waterston R."/>
            <person name="Wilson R.K."/>
        </authorList>
    </citation>
    <scope>NUCLEOTIDE SEQUENCE [LARGE SCALE GENOMIC DNA]</scope>
    <source>
        <strain>LT2 / SGSC1412 / ATCC 700720</strain>
    </source>
</reference>
<reference key="2">
    <citation type="journal article" date="2002" name="Science">
        <title>Sir2-dependent activation of acetyl-CoA synthetase by deacetylation of active lysine.</title>
        <authorList>
            <person name="Starai V.J."/>
            <person name="Celic I."/>
            <person name="Cole R.N."/>
            <person name="Boeke J.D."/>
            <person name="Escalante-Semerena J.C."/>
        </authorList>
    </citation>
    <scope>ACETYLATION AT LYS-609</scope>
    <scope>DEACETYLATION BY SIR2 HOMOLOG</scope>
    <source>
        <strain>LT2 / SGSC1412 / ATCC 700720</strain>
    </source>
</reference>
<reference key="3">
    <citation type="journal article" date="2004" name="J. Mol. Biol.">
        <title>Identification of the protein acetyltransferase (Pat) enzyme that acetylates acetyl-CoA synthetase in Salmonella enterica.</title>
        <authorList>
            <person name="Starai V.J."/>
            <person name="Escalante-Semerena J.C."/>
        </authorList>
    </citation>
    <scope>ACETYLATION AT LYS-609</scope>
    <source>
        <strain>LT2</strain>
    </source>
</reference>
<reference key="4">
    <citation type="journal article" date="2005" name="Microbiology">
        <title>Acetate excretion during growth of Salmonella enterica on ethanolamine requires phosphotransacetylase (EutD) activity, and acetate recapture requires acetyl-CoA synthetase (Acs) and phosphotransacetylase (Pta) activities.</title>
        <authorList>
            <person name="Starai V.J."/>
            <person name="Garrity J."/>
            <person name="Escalante-Semerena J.C."/>
        </authorList>
    </citation>
    <scope>FUNCTION</scope>
    <source>
        <strain>LT2</strain>
    </source>
</reference>
<reference key="5">
    <citation type="journal article" date="2003" name="Biochemistry">
        <title>The 1.75 A crystal structure of acetyl-CoA synthetase bound to adenosine-5'-propylphosphate and coenzyme A.</title>
        <authorList>
            <person name="Gulick A.M."/>
            <person name="Starai V.J."/>
            <person name="Horswill A.R."/>
            <person name="Homick K.M."/>
            <person name="Escalante-Semerena J.C."/>
        </authorList>
    </citation>
    <scope>X-RAY CRYSTALLOGRAPHY (1.75 ANGSTROMS) IN COMPLEX WITH ATP ANALOG AND COENZYME A</scope>
    <scope>SUBUNIT</scope>
</reference>
<reference key="6">
    <citation type="journal article" date="2007" name="Biochemistry">
        <title>Biochemical and crystallographic analysis of substrate binding and conformational changes in acetyl-CoA synthetase.</title>
        <authorList>
            <person name="Reger A.S."/>
            <person name="Carney J.M."/>
            <person name="Gulick A.M."/>
        </authorList>
    </citation>
    <scope>X-RAY CRYSTALLOGRAPHY (2.42 ANGSTROMS) OF WILD-TYPE AND MUTANTS IN COMPLEX WITH THE ATP ANALOG AMP; COENZYME A AND MAGNESIUM IONS</scope>
    <scope>FUNCTION</scope>
    <scope>MUTAGENESIS OF ARG-194; ALA-357; ASP-517; GLY-524; ARG-526; ARG-584 AND LYS-609</scope>
    <scope>BIOPHYSICOCHEMICAL PROPERTIES</scope>
    <scope>SUBUNIT</scope>
</reference>
<name>ACSA_SALTY</name>
<accession>Q8ZKF6</accession>
<dbReference type="EC" id="6.2.1.1" evidence="1"/>
<dbReference type="EMBL" id="AE006468">
    <property type="protein sequence ID" value="AAL23099.1"/>
    <property type="molecule type" value="Genomic_DNA"/>
</dbReference>
<dbReference type="RefSeq" id="NP_463140.1">
    <property type="nucleotide sequence ID" value="NC_003197.2"/>
</dbReference>
<dbReference type="RefSeq" id="WP_000083882.1">
    <property type="nucleotide sequence ID" value="NC_003197.2"/>
</dbReference>
<dbReference type="PDB" id="1PG3">
    <property type="method" value="X-ray"/>
    <property type="resolution" value="2.30 A"/>
    <property type="chains" value="A/B=1-652"/>
</dbReference>
<dbReference type="PDB" id="1PG4">
    <property type="method" value="X-ray"/>
    <property type="resolution" value="1.75 A"/>
    <property type="chains" value="A/B=1-652"/>
</dbReference>
<dbReference type="PDB" id="2P20">
    <property type="method" value="X-ray"/>
    <property type="resolution" value="2.22 A"/>
    <property type="chains" value="A/B=1-652"/>
</dbReference>
<dbReference type="PDB" id="2P2B">
    <property type="method" value="X-ray"/>
    <property type="resolution" value="2.20 A"/>
    <property type="chains" value="A/B=1-652"/>
</dbReference>
<dbReference type="PDB" id="2P2F">
    <property type="method" value="X-ray"/>
    <property type="resolution" value="2.58 A"/>
    <property type="chains" value="A/B=1-652"/>
</dbReference>
<dbReference type="PDB" id="2P2J">
    <property type="method" value="X-ray"/>
    <property type="resolution" value="2.30 A"/>
    <property type="chains" value="A/B=1-652"/>
</dbReference>
<dbReference type="PDB" id="2P2M">
    <property type="method" value="X-ray"/>
    <property type="resolution" value="2.11 A"/>
    <property type="chains" value="A/B=1-652"/>
</dbReference>
<dbReference type="PDB" id="2P2Q">
    <property type="method" value="X-ray"/>
    <property type="resolution" value="2.42 A"/>
    <property type="chains" value="A/B=1-652"/>
</dbReference>
<dbReference type="PDB" id="5JRH">
    <property type="method" value="X-ray"/>
    <property type="resolution" value="1.64 A"/>
    <property type="chains" value="A/B=1-652"/>
</dbReference>
<dbReference type="PDBsum" id="1PG3"/>
<dbReference type="PDBsum" id="1PG4"/>
<dbReference type="PDBsum" id="2P20"/>
<dbReference type="PDBsum" id="2P2B"/>
<dbReference type="PDBsum" id="2P2F"/>
<dbReference type="PDBsum" id="2P2J"/>
<dbReference type="PDBsum" id="2P2M"/>
<dbReference type="PDBsum" id="2P2Q"/>
<dbReference type="PDBsum" id="5JRH"/>
<dbReference type="SMR" id="Q8ZKF6"/>
<dbReference type="STRING" id="99287.STM4275"/>
<dbReference type="DrugBank" id="DB03230">
    <property type="generic name" value="Adenosine-5'-Propylphosphate"/>
</dbReference>
<dbReference type="DrugBank" id="DB01992">
    <property type="generic name" value="Coenzyme A"/>
</dbReference>
<dbReference type="iPTMnet" id="Q8ZKF6"/>
<dbReference type="PaxDb" id="99287-STM4275"/>
<dbReference type="GeneID" id="1255801"/>
<dbReference type="KEGG" id="stm:STM4275"/>
<dbReference type="PATRIC" id="fig|99287.12.peg.4496"/>
<dbReference type="HOGENOM" id="CLU_000022_3_6_6"/>
<dbReference type="OMA" id="INVSYNC"/>
<dbReference type="PhylomeDB" id="Q8ZKF6"/>
<dbReference type="BioCyc" id="SENT99287:STM4275-MONOMER"/>
<dbReference type="SABIO-RK" id="Q8ZKF6"/>
<dbReference type="EvolutionaryTrace" id="Q8ZKF6"/>
<dbReference type="Proteomes" id="UP000001014">
    <property type="component" value="Chromosome"/>
</dbReference>
<dbReference type="GO" id="GO:0005829">
    <property type="term" value="C:cytosol"/>
    <property type="evidence" value="ECO:0000318"/>
    <property type="project" value="GO_Central"/>
</dbReference>
<dbReference type="GO" id="GO:0003987">
    <property type="term" value="F:acetate-CoA ligase activity"/>
    <property type="evidence" value="ECO:0000314"/>
    <property type="project" value="CACAO"/>
</dbReference>
<dbReference type="GO" id="GO:0016208">
    <property type="term" value="F:AMP binding"/>
    <property type="evidence" value="ECO:0007669"/>
    <property type="project" value="InterPro"/>
</dbReference>
<dbReference type="GO" id="GO:0005524">
    <property type="term" value="F:ATP binding"/>
    <property type="evidence" value="ECO:0007669"/>
    <property type="project" value="UniProtKB-KW"/>
</dbReference>
<dbReference type="GO" id="GO:0046872">
    <property type="term" value="F:metal ion binding"/>
    <property type="evidence" value="ECO:0007669"/>
    <property type="project" value="UniProtKB-KW"/>
</dbReference>
<dbReference type="GO" id="GO:0006085">
    <property type="term" value="P:acetyl-CoA biosynthetic process"/>
    <property type="evidence" value="ECO:0000318"/>
    <property type="project" value="GO_Central"/>
</dbReference>
<dbReference type="GO" id="GO:0019427">
    <property type="term" value="P:acetyl-CoA biosynthetic process from acetate"/>
    <property type="evidence" value="ECO:0007669"/>
    <property type="project" value="UniProtKB-UniRule"/>
</dbReference>
<dbReference type="GO" id="GO:0006935">
    <property type="term" value="P:chemotaxis"/>
    <property type="evidence" value="ECO:0007669"/>
    <property type="project" value="UniProtKB-UniRule"/>
</dbReference>
<dbReference type="CDD" id="cd05966">
    <property type="entry name" value="ACS"/>
    <property type="match status" value="1"/>
</dbReference>
<dbReference type="FunFam" id="3.30.300.30:FF:000004">
    <property type="entry name" value="Acetyl-coenzyme A synthetase"/>
    <property type="match status" value="1"/>
</dbReference>
<dbReference type="FunFam" id="3.40.50.12780:FF:000001">
    <property type="entry name" value="Acetyl-coenzyme A synthetase"/>
    <property type="match status" value="1"/>
</dbReference>
<dbReference type="Gene3D" id="3.30.300.30">
    <property type="match status" value="1"/>
</dbReference>
<dbReference type="Gene3D" id="3.40.50.12780">
    <property type="entry name" value="N-terminal domain of ligase-like"/>
    <property type="match status" value="1"/>
</dbReference>
<dbReference type="HAMAP" id="MF_01123">
    <property type="entry name" value="Ac_CoA_synth"/>
    <property type="match status" value="1"/>
</dbReference>
<dbReference type="InterPro" id="IPR011904">
    <property type="entry name" value="Ac_CoA_lig"/>
</dbReference>
<dbReference type="InterPro" id="IPR032387">
    <property type="entry name" value="ACAS_N"/>
</dbReference>
<dbReference type="InterPro" id="IPR025110">
    <property type="entry name" value="AMP-bd_C"/>
</dbReference>
<dbReference type="InterPro" id="IPR045851">
    <property type="entry name" value="AMP-bd_C_sf"/>
</dbReference>
<dbReference type="InterPro" id="IPR020845">
    <property type="entry name" value="AMP-binding_CS"/>
</dbReference>
<dbReference type="InterPro" id="IPR000873">
    <property type="entry name" value="AMP-dep_synth/lig_dom"/>
</dbReference>
<dbReference type="InterPro" id="IPR042099">
    <property type="entry name" value="ANL_N_sf"/>
</dbReference>
<dbReference type="NCBIfam" id="TIGR02188">
    <property type="entry name" value="Ac_CoA_lig_AcsA"/>
    <property type="match status" value="1"/>
</dbReference>
<dbReference type="NCBIfam" id="NF001208">
    <property type="entry name" value="PRK00174.1"/>
    <property type="match status" value="1"/>
</dbReference>
<dbReference type="PANTHER" id="PTHR24095">
    <property type="entry name" value="ACETYL-COENZYME A SYNTHETASE"/>
    <property type="match status" value="1"/>
</dbReference>
<dbReference type="PANTHER" id="PTHR24095:SF243">
    <property type="entry name" value="ACETYL-COENZYME A SYNTHETASE"/>
    <property type="match status" value="1"/>
</dbReference>
<dbReference type="Pfam" id="PF16177">
    <property type="entry name" value="ACAS_N"/>
    <property type="match status" value="1"/>
</dbReference>
<dbReference type="Pfam" id="PF00501">
    <property type="entry name" value="AMP-binding"/>
    <property type="match status" value="1"/>
</dbReference>
<dbReference type="Pfam" id="PF13193">
    <property type="entry name" value="AMP-binding_C"/>
    <property type="match status" value="1"/>
</dbReference>
<dbReference type="SUPFAM" id="SSF56801">
    <property type="entry name" value="Acetyl-CoA synthetase-like"/>
    <property type="match status" value="1"/>
</dbReference>
<dbReference type="PROSITE" id="PS00455">
    <property type="entry name" value="AMP_BINDING"/>
    <property type="match status" value="1"/>
</dbReference>
<sequence length="652" mass="72153">MSQTHKHAIPANIADRCLINPEQYETKYKQSINDPDTFWGEQGKILDWITPYQKVKNTSFAPGNVSIKWYEDGTLNLAANCLDRHLQENGDRTAIIWEGDDTSQSKHISYRELHRDVCRFANTLLDLGIKKGDVVAIYMPMVPEAAVAMLACARIGAVHSVIFGGFSPEAVAGRIIDSSSRLVITADEGVRAGRSIPLKKNVDDALKNPNVTSVEHVIVLKRTGSDIDWQEGRDLWWRDLIEKASPEHQPEAMNAEDPLFILYTSGSTGKPKGVLHTTGGYLVYAATTFKYVFDYHPGDIYWCTADVGWVTGHSYLLYGPLACGATTLMFEGVPNWPTPARMCQVVDKHQVNILYTAPTAIRALMAEGDKAIEGTDRSSLRILGSVGEPINPEAWEWYWKKIGKEKCPVVDTWWQTETGGFMITPLPGAIELKAGSATRPFFGVQPALVDNEGHPQEGATEGNLVITDSWPGQARTLFGDHERFEQTYFSTFKNMYFSGDGARRDEDGYYWITGRVDDVLNVSGHRLGTAEIESALVAHPKIAEAAVVGIPHAIKGQAIYAYVTLNHGEEPSPELYAEVRNWVRKEIGPLATPDVLHWTDSLPKTRSGKIMRRILRKIAAGDTSNLGDTSTLADPGVVEKLLEEKQAIAMPS</sequence>
<protein>
    <recommendedName>
        <fullName evidence="1">Acetyl-coenzyme A synthetase</fullName>
        <shortName evidence="1">AcCoA synthetase</shortName>
        <shortName evidence="1">Acs</shortName>
        <ecNumber evidence="1">6.2.1.1</ecNumber>
    </recommendedName>
    <alternativeName>
        <fullName evidence="1">Acetate--CoA ligase</fullName>
    </alternativeName>
    <alternativeName>
        <fullName evidence="1">Acyl-activating enzyme</fullName>
    </alternativeName>
</protein>
<gene>
    <name evidence="1" type="primary">acs</name>
    <name type="ordered locus">STM4275</name>
</gene>
<organism>
    <name type="scientific">Salmonella typhimurium (strain LT2 / SGSC1412 / ATCC 700720)</name>
    <dbReference type="NCBI Taxonomy" id="99287"/>
    <lineage>
        <taxon>Bacteria</taxon>
        <taxon>Pseudomonadati</taxon>
        <taxon>Pseudomonadota</taxon>
        <taxon>Gammaproteobacteria</taxon>
        <taxon>Enterobacterales</taxon>
        <taxon>Enterobacteriaceae</taxon>
        <taxon>Salmonella</taxon>
    </lineage>
</organism>
<comment type="function">
    <text evidence="1 5 6">Catalyzes the conversion of acetate into acetyl-CoA (AcCoA), an essential intermediate at the junction of anabolic and catabolic pathways. Acs undergoes a two-step reaction. In the first half reaction, Acs combines acetate with ATP to form acetyl-adenylate (AcAMP) intermediate. In the second half reaction, it can then transfer the acetyl group from AcAMP to the sulfhydryl group of CoA, forming the product AcCoA. Required for acetate recapture but not for acetate excretion when this organism is grown on ethanolamine (PubMed:16272400).</text>
</comment>
<comment type="function">
    <text evidence="1">Enables the cell to use acetate during aerobic growth to generate energy via the TCA cycle, and biosynthetic compounds via the glyoxylate shunt. Acetylates CheY, the response regulator involved in flagellar movement and chemotaxis.</text>
</comment>
<comment type="catalytic activity">
    <reaction evidence="1">
        <text>acetate + ATP + CoA = acetyl-CoA + AMP + diphosphate</text>
        <dbReference type="Rhea" id="RHEA:23176"/>
        <dbReference type="ChEBI" id="CHEBI:30089"/>
        <dbReference type="ChEBI" id="CHEBI:30616"/>
        <dbReference type="ChEBI" id="CHEBI:33019"/>
        <dbReference type="ChEBI" id="CHEBI:57287"/>
        <dbReference type="ChEBI" id="CHEBI:57288"/>
        <dbReference type="ChEBI" id="CHEBI:456215"/>
        <dbReference type="EC" id="6.2.1.1"/>
    </reaction>
</comment>
<comment type="cofactor">
    <cofactor>
        <name>Mg(2+)</name>
        <dbReference type="ChEBI" id="CHEBI:18420"/>
    </cofactor>
</comment>
<comment type="biophysicochemical properties">
    <kinetics>
        <KM evidence="6">77.1 uM for ATP (at pH 7.5 and at 37 degrees Celsius)</KM>
        <KM evidence="6">50 uM for CoA (at pH 7.5 and at 37 degrees Celsius)</KM>
        <KM evidence="6">6047 uM for acetate (at pH 7.5 and at 37 degrees Celsius)</KM>
        <KM evidence="6">9413 uM for propionate (at pH 7.5 and at 37 degrees Celsius)</KM>
        <KM evidence="6">9450 uM for glycine (at pH 7.5 and at 37 degrees Celsius)</KM>
    </kinetics>
</comment>
<comment type="subunit">
    <text evidence="3 6">Monomer.</text>
</comment>
<comment type="PTM">
    <text evidence="1 2 4">Acetylated. Deacetylation by the SIR2-homolog deacetylase activates the enzyme.</text>
</comment>
<comment type="similarity">
    <text evidence="1">Belongs to the ATP-dependent AMP-binding enzyme family.</text>
</comment>
<feature type="chain" id="PRO_0000208386" description="Acetyl-coenzyme A synthetase">
    <location>
        <begin position="1"/>
        <end position="652"/>
    </location>
</feature>
<feature type="binding site">
    <location>
        <begin position="191"/>
        <end position="194"/>
    </location>
    <ligand>
        <name>CoA</name>
        <dbReference type="ChEBI" id="CHEBI:57287"/>
    </ligand>
</feature>
<feature type="binding site" evidence="1 3 6">
    <location>
        <position position="311"/>
    </location>
    <ligand>
        <name>CoA</name>
        <dbReference type="ChEBI" id="CHEBI:57287"/>
    </ligand>
</feature>
<feature type="binding site" evidence="1 3 6">
    <location>
        <position position="335"/>
    </location>
    <ligand>
        <name>CoA</name>
        <dbReference type="ChEBI" id="CHEBI:57287"/>
    </ligand>
</feature>
<feature type="binding site">
    <location>
        <begin position="387"/>
        <end position="389"/>
    </location>
    <ligand>
        <name>ATP</name>
        <dbReference type="ChEBI" id="CHEBI:30616"/>
    </ligand>
</feature>
<feature type="binding site">
    <location>
        <begin position="411"/>
        <end position="416"/>
    </location>
    <ligand>
        <name>ATP</name>
        <dbReference type="ChEBI" id="CHEBI:30616"/>
    </ligand>
</feature>
<feature type="binding site">
    <location>
        <position position="500"/>
    </location>
    <ligand>
        <name>ATP</name>
        <dbReference type="ChEBI" id="CHEBI:30616"/>
    </ligand>
</feature>
<feature type="binding site">
    <location>
        <position position="515"/>
    </location>
    <ligand>
        <name>ATP</name>
        <dbReference type="ChEBI" id="CHEBI:30616"/>
    </ligand>
</feature>
<feature type="binding site" evidence="1 3 6">
    <location>
        <position position="523"/>
    </location>
    <ligand>
        <name>CoA</name>
        <dbReference type="ChEBI" id="CHEBI:57287"/>
    </ligand>
</feature>
<feature type="binding site">
    <location>
        <position position="526"/>
    </location>
    <ligand>
        <name>ATP</name>
        <dbReference type="ChEBI" id="CHEBI:30616"/>
    </ligand>
</feature>
<feature type="binding site">
    <location>
        <position position="537"/>
    </location>
    <ligand>
        <name>Mg(2+)</name>
        <dbReference type="ChEBI" id="CHEBI:18420"/>
    </ligand>
</feature>
<feature type="binding site">
    <location>
        <position position="539"/>
    </location>
    <ligand>
        <name>Mg(2+)</name>
        <dbReference type="ChEBI" id="CHEBI:18420"/>
    </ligand>
</feature>
<feature type="binding site">
    <location>
        <position position="542"/>
    </location>
    <ligand>
        <name>Mg(2+)</name>
        <dbReference type="ChEBI" id="CHEBI:18420"/>
    </ligand>
</feature>
<feature type="binding site" evidence="1 3 6">
    <location>
        <position position="584"/>
    </location>
    <ligand>
        <name>CoA</name>
        <dbReference type="ChEBI" id="CHEBI:57287"/>
    </ligand>
</feature>
<feature type="site" description="Hinge residue important for conformational flexibility">
    <location>
        <position position="517"/>
    </location>
</feature>
<feature type="modified residue" description="N6-acetyllysine; by Pat" evidence="1 2 4">
    <location>
        <position position="609"/>
    </location>
</feature>
<feature type="mutagenesis site" description="Results in a 2-fold reduction in the catalytic efficiency for both ATP and CoA. 2-fold increase in the affinity for ATP and 3-fold reduction for CoA." evidence="6">
    <original>R</original>
    <variation>A</variation>
    <location>
        <position position="194"/>
    </location>
</feature>
<feature type="mutagenesis site" description="Results in a 2-fold reduction in the catalytic efficiency for both ATP and CoA. 2-fold increase in the affinity for ATP and 2-fold reduction for CoA." evidence="6">
    <original>R</original>
    <variation>E</variation>
    <location>
        <position position="194"/>
    </location>
</feature>
<feature type="mutagenesis site" description="Results in a 2-fold reduction in the catalytic efficiency for both ATP and CoA. 3-fold increase in the affinity for ATP and 3-fold reduction for CoA." evidence="6">
    <original>A</original>
    <variation>V</variation>
    <location>
        <position position="357"/>
    </location>
</feature>
<feature type="mutagenesis site" description="Results in a 2-fold reduction in the catalytic efficiency for both ATP and CoA. 2-fold increase in the affinity for ATP and 10-fold reduction for CoA." evidence="6">
    <original>D</original>
    <variation>G</variation>
    <location>
        <position position="517"/>
    </location>
</feature>
<feature type="mutagenesis site" description="Results in a 2-fold reduction in the catalytic efficiency for both ATP and CoA. 3-fold reduction in the affinity for ATP and 4.5-fold reduction for CoA." evidence="6">
    <original>D</original>
    <variation>P</variation>
    <location>
        <position position="517"/>
    </location>
</feature>
<feature type="mutagenesis site" description="No acetyl-coenzyme A synthetase activity." evidence="6">
    <original>G</original>
    <variation>L</variation>
    <location>
        <position position="524"/>
    </location>
</feature>
<feature type="mutagenesis site" description="Results in a 2-fold reduction in the catalytic efficiency for both ATP and CoA. Almost the same affinity as the wild-type for ATP, but 9-fold reduction in the affinity for CoA." evidence="6">
    <original>G</original>
    <variation>S</variation>
    <location>
        <position position="524"/>
    </location>
</feature>
<feature type="mutagenesis site" description="Results in a 2-fold reduction in the catalytic efficiency for both ATP and CoA. 3-fold increase in the affinity for ATP and 4-fold reduction for CoA." evidence="6">
    <original>R</original>
    <variation>A</variation>
    <location>
        <position position="526"/>
    </location>
</feature>
<feature type="mutagenesis site" description="Results in a 2-fold reduction in the catalytic efficiency for both ATP and CoA. 2-fold increase in the affinity for ATP and 7-fold reduction for CoA." evidence="6">
    <original>R</original>
    <variation>A</variation>
    <location>
        <position position="584"/>
    </location>
</feature>
<feature type="mutagenesis site" description="Results in a 2-fold reduction in the catalytic efficiency for both ATP and CoA. 3-fold increase in the affinity for ATP and 8-fold reduction for CoA." evidence="6">
    <original>R</original>
    <variation>E</variation>
    <location>
        <position position="584"/>
    </location>
</feature>
<feature type="mutagenesis site" description="No acetyl-coenzyme A synthetase activity." evidence="6">
    <original>K</original>
    <variation>A</variation>
    <location>
        <position position="609"/>
    </location>
</feature>
<feature type="helix" evidence="9">
    <location>
        <begin position="11"/>
        <end position="16"/>
    </location>
</feature>
<feature type="helix" evidence="9">
    <location>
        <begin position="21"/>
        <end position="33"/>
    </location>
</feature>
<feature type="helix" evidence="9">
    <location>
        <begin position="35"/>
        <end position="42"/>
    </location>
</feature>
<feature type="helix" evidence="9">
    <location>
        <begin position="43"/>
        <end position="45"/>
    </location>
</feature>
<feature type="strand" evidence="9">
    <location>
        <begin position="56"/>
        <end position="59"/>
    </location>
</feature>
<feature type="strand" evidence="9">
    <location>
        <begin position="66"/>
        <end position="70"/>
    </location>
</feature>
<feature type="helix" evidence="9">
    <location>
        <begin position="77"/>
        <end position="81"/>
    </location>
</feature>
<feature type="helix" evidence="9">
    <location>
        <begin position="83"/>
        <end position="85"/>
    </location>
</feature>
<feature type="helix" evidence="9">
    <location>
        <begin position="86"/>
        <end position="89"/>
    </location>
</feature>
<feature type="strand" evidence="9">
    <location>
        <begin position="92"/>
        <end position="98"/>
    </location>
</feature>
<feature type="strand" evidence="9">
    <location>
        <begin position="105"/>
        <end position="109"/>
    </location>
</feature>
<feature type="helix" evidence="9">
    <location>
        <begin position="110"/>
        <end position="126"/>
    </location>
</feature>
<feature type="strand" evidence="9">
    <location>
        <begin position="134"/>
        <end position="138"/>
    </location>
</feature>
<feature type="helix" evidence="9">
    <location>
        <begin position="143"/>
        <end position="155"/>
    </location>
</feature>
<feature type="strand" evidence="9">
    <location>
        <begin position="158"/>
        <end position="161"/>
    </location>
</feature>
<feature type="helix" evidence="9">
    <location>
        <begin position="168"/>
        <end position="178"/>
    </location>
</feature>
<feature type="strand" evidence="9">
    <location>
        <begin position="181"/>
        <end position="187"/>
    </location>
</feature>
<feature type="strand" evidence="9">
    <location>
        <begin position="189"/>
        <end position="191"/>
    </location>
</feature>
<feature type="strand" evidence="9">
    <location>
        <begin position="194"/>
        <end position="196"/>
    </location>
</feature>
<feature type="helix" evidence="9">
    <location>
        <begin position="198"/>
        <end position="206"/>
    </location>
</feature>
<feature type="strand" evidence="9">
    <location>
        <begin position="216"/>
        <end position="220"/>
    </location>
</feature>
<feature type="turn" evidence="9">
    <location>
        <begin position="231"/>
        <end position="233"/>
    </location>
</feature>
<feature type="strand" evidence="9">
    <location>
        <begin position="234"/>
        <end position="236"/>
    </location>
</feature>
<feature type="helix" evidence="9">
    <location>
        <begin position="237"/>
        <end position="243"/>
    </location>
</feature>
<feature type="strand" evidence="9">
    <location>
        <begin position="257"/>
        <end position="264"/>
    </location>
</feature>
<feature type="strand" evidence="9">
    <location>
        <begin position="267"/>
        <end position="270"/>
    </location>
</feature>
<feature type="strand" evidence="9">
    <location>
        <begin position="272"/>
        <end position="278"/>
    </location>
</feature>
<feature type="helix" evidence="9">
    <location>
        <begin position="279"/>
        <end position="292"/>
    </location>
</feature>
<feature type="strand" evidence="9">
    <location>
        <begin position="300"/>
        <end position="303"/>
    </location>
</feature>
<feature type="helix" evidence="9">
    <location>
        <begin position="310"/>
        <end position="314"/>
    </location>
</feature>
<feature type="turn" evidence="9">
    <location>
        <begin position="315"/>
        <end position="317"/>
    </location>
</feature>
<feature type="helix" evidence="9">
    <location>
        <begin position="318"/>
        <end position="322"/>
    </location>
</feature>
<feature type="strand" evidence="9">
    <location>
        <begin position="326"/>
        <end position="330"/>
    </location>
</feature>
<feature type="strand" evidence="9">
    <location>
        <begin position="336"/>
        <end position="338"/>
    </location>
</feature>
<feature type="helix" evidence="9">
    <location>
        <begin position="341"/>
        <end position="349"/>
    </location>
</feature>
<feature type="strand" evidence="9">
    <location>
        <begin position="352"/>
        <end position="356"/>
    </location>
</feature>
<feature type="helix" evidence="9">
    <location>
        <begin position="358"/>
        <end position="365"/>
    </location>
</feature>
<feature type="helix" evidence="9">
    <location>
        <begin position="366"/>
        <end position="371"/>
    </location>
</feature>
<feature type="turn" evidence="9">
    <location>
        <begin position="372"/>
        <end position="374"/>
    </location>
</feature>
<feature type="strand" evidence="9">
    <location>
        <begin position="382"/>
        <end position="388"/>
    </location>
</feature>
<feature type="helix" evidence="9">
    <location>
        <begin position="392"/>
        <end position="401"/>
    </location>
</feature>
<feature type="turn" evidence="9">
    <location>
        <begin position="402"/>
        <end position="405"/>
    </location>
</feature>
<feature type="strand" evidence="9">
    <location>
        <begin position="409"/>
        <end position="413"/>
    </location>
</feature>
<feature type="helix" evidence="9">
    <location>
        <begin position="416"/>
        <end position="418"/>
    </location>
</feature>
<feature type="turn" evidence="9">
    <location>
        <begin position="427"/>
        <end position="429"/>
    </location>
</feature>
<feature type="strand" evidence="9">
    <location>
        <begin position="438"/>
        <end position="440"/>
    </location>
</feature>
<feature type="strand" evidence="9">
    <location>
        <begin position="446"/>
        <end position="449"/>
    </location>
</feature>
<feature type="strand" evidence="9">
    <location>
        <begin position="458"/>
        <end position="466"/>
    </location>
</feature>
<feature type="helix" evidence="9">
    <location>
        <begin position="481"/>
        <end position="489"/>
    </location>
</feature>
<feature type="strand" evidence="9">
    <location>
        <begin position="490"/>
        <end position="492"/>
    </location>
</feature>
<feature type="strand" evidence="9">
    <location>
        <begin position="495"/>
        <end position="504"/>
    </location>
</feature>
<feature type="strand" evidence="9">
    <location>
        <begin position="510"/>
        <end position="522"/>
    </location>
</feature>
<feature type="strand" evidence="9">
    <location>
        <begin position="525"/>
        <end position="528"/>
    </location>
</feature>
<feature type="helix" evidence="9">
    <location>
        <begin position="529"/>
        <end position="537"/>
    </location>
</feature>
<feature type="strand" evidence="9">
    <location>
        <begin position="542"/>
        <end position="552"/>
    </location>
</feature>
<feature type="turn" evidence="9">
    <location>
        <begin position="553"/>
        <end position="555"/>
    </location>
</feature>
<feature type="strand" evidence="9">
    <location>
        <begin position="556"/>
        <end position="565"/>
    </location>
</feature>
<feature type="helix" evidence="9">
    <location>
        <begin position="573"/>
        <end position="586"/>
    </location>
</feature>
<feature type="helix" evidence="9">
    <location>
        <begin position="589"/>
        <end position="591"/>
    </location>
</feature>
<feature type="strand" evidence="9">
    <location>
        <begin position="594"/>
        <end position="598"/>
    </location>
</feature>
<feature type="strand" evidence="8">
    <location>
        <begin position="604"/>
        <end position="607"/>
    </location>
</feature>
<feature type="helix" evidence="9">
    <location>
        <begin position="612"/>
        <end position="620"/>
    </location>
</feature>
<feature type="helix" evidence="7">
    <location>
        <begin position="629"/>
        <end position="631"/>
    </location>
</feature>
<feature type="strand" evidence="8">
    <location>
        <begin position="632"/>
        <end position="634"/>
    </location>
</feature>
<feature type="helix" evidence="9">
    <location>
        <begin position="637"/>
        <end position="646"/>
    </location>
</feature>
<evidence type="ECO:0000255" key="1">
    <source>
        <dbReference type="HAMAP-Rule" id="MF_01123"/>
    </source>
</evidence>
<evidence type="ECO:0000269" key="2">
    <source>
    </source>
</evidence>
<evidence type="ECO:0000269" key="3">
    <source>
    </source>
</evidence>
<evidence type="ECO:0000269" key="4">
    <source>
    </source>
</evidence>
<evidence type="ECO:0000269" key="5">
    <source>
    </source>
</evidence>
<evidence type="ECO:0000269" key="6">
    <source>
    </source>
</evidence>
<evidence type="ECO:0007829" key="7">
    <source>
        <dbReference type="PDB" id="1PG4"/>
    </source>
</evidence>
<evidence type="ECO:0007829" key="8">
    <source>
        <dbReference type="PDB" id="2P2M"/>
    </source>
</evidence>
<evidence type="ECO:0007829" key="9">
    <source>
        <dbReference type="PDB" id="5JRH"/>
    </source>
</evidence>
<proteinExistence type="evidence at protein level"/>